<evidence type="ECO:0000255" key="1">
    <source>
        <dbReference type="PROSITE-ProRule" id="PRU00159"/>
    </source>
</evidence>
<evidence type="ECO:0000255" key="2">
    <source>
        <dbReference type="PROSITE-ProRule" id="PRU00212"/>
    </source>
</evidence>
<evidence type="ECO:0000255" key="3">
    <source>
        <dbReference type="PROSITE-ProRule" id="PRU00565"/>
    </source>
</evidence>
<evidence type="ECO:0000269" key="4">
    <source>
    </source>
</evidence>
<evidence type="ECO:0000269" key="5">
    <source>
    </source>
</evidence>
<evidence type="ECO:0000269" key="6">
    <source>
    </source>
</evidence>
<evidence type="ECO:0000269" key="7">
    <source>
    </source>
</evidence>
<evidence type="ECO:0000303" key="8">
    <source>
    </source>
</evidence>
<evidence type="ECO:0000303" key="9">
    <source>
    </source>
</evidence>
<evidence type="ECO:0000303" key="10">
    <source>
    </source>
</evidence>
<evidence type="ECO:0000305" key="11"/>
<evidence type="ECO:0000312" key="12">
    <source>
        <dbReference type="EMBL" id="BAD10710.1"/>
    </source>
</evidence>
<evidence type="ECO:0000312" key="13">
    <source>
        <dbReference type="EMBL" id="BAF23997.1"/>
    </source>
</evidence>
<evidence type="ECO:0000312" key="14">
    <source>
        <dbReference type="EMBL" id="BAT05960.1"/>
    </source>
</evidence>
<evidence type="ECO:0000312" key="15">
    <source>
        <dbReference type="EMBL" id="EEE68886.1"/>
    </source>
</evidence>
<gene>
    <name evidence="10" type="primary">OSK4</name>
    <name evidence="8" type="synonym">OSK24</name>
    <name evidence="9" type="synonym">SNRK1B</name>
    <name evidence="11" type="ordered locus">LOC_Os08g37800</name>
    <name evidence="13" type="ordered locus">Os08g0484600</name>
    <name evidence="15" type="ORF">OsJ_27714</name>
    <name evidence="14" type="ORF">OSNPB_080484600</name>
    <name evidence="12" type="ORF">P0419H09.18</name>
</gene>
<comment type="function">
    <text evidence="6">Suppressor of flowering in long days (LD) via the that up-regulation of HD1 and the down-regulation of EHD1. Can phosphorylate HD1 in the presence of HDR1.</text>
</comment>
<comment type="catalytic activity">
    <reaction evidence="7">
        <text>L-seryl-[protein] + ATP = O-phospho-L-seryl-[protein] + ADP + H(+)</text>
        <dbReference type="Rhea" id="RHEA:17989"/>
        <dbReference type="Rhea" id="RHEA-COMP:9863"/>
        <dbReference type="Rhea" id="RHEA-COMP:11604"/>
        <dbReference type="ChEBI" id="CHEBI:15378"/>
        <dbReference type="ChEBI" id="CHEBI:29999"/>
        <dbReference type="ChEBI" id="CHEBI:30616"/>
        <dbReference type="ChEBI" id="CHEBI:83421"/>
        <dbReference type="ChEBI" id="CHEBI:456216"/>
        <dbReference type="EC" id="2.7.11.1"/>
    </reaction>
</comment>
<comment type="catalytic activity">
    <reaction evidence="7">
        <text>L-threonyl-[protein] + ATP = O-phospho-L-threonyl-[protein] + ADP + H(+)</text>
        <dbReference type="Rhea" id="RHEA:46608"/>
        <dbReference type="Rhea" id="RHEA-COMP:11060"/>
        <dbReference type="Rhea" id="RHEA-COMP:11605"/>
        <dbReference type="ChEBI" id="CHEBI:15378"/>
        <dbReference type="ChEBI" id="CHEBI:30013"/>
        <dbReference type="ChEBI" id="CHEBI:30616"/>
        <dbReference type="ChEBI" id="CHEBI:61977"/>
        <dbReference type="ChEBI" id="CHEBI:456216"/>
        <dbReference type="EC" id="2.7.11.1"/>
    </reaction>
</comment>
<comment type="subunit">
    <text evidence="6">Interacts with HDR1.</text>
</comment>
<comment type="subcellular location">
    <subcellularLocation>
        <location evidence="6">Nucleus</location>
    </subcellularLocation>
</comment>
<comment type="tissue specificity">
    <text evidence="4 7">Strongly expressed in immature seeds (PubMed:9870704). Mostly expressed in panicles, leaf sheaths and roots, and to a lower extent, in germinating seeds and leaf blades (PubMed:16087344).</text>
</comment>
<comment type="developmental stage">
    <text evidence="4 7">Accumulates transiently in the early stages of seed maturation (PubMed:9870704). Observed in maturating caryopsis 1 week after flowering (DAF). Expressed in tissues where and when starch granules appear. Detected in the pericarp at the early stage with a shift to the endosperm as the endosperm cells are formed. Confined to both aleurone layer and endosperm cells around 15 days after flowering. Also present in the basal part of leaf sheath (PubMed:16087344).</text>
</comment>
<comment type="disruption phenotype">
    <text evidence="5">Normal expression of MYBS1 and AAMY3 in response to glucose levels. Normal seed germination and seedling growth.</text>
</comment>
<comment type="similarity">
    <text evidence="1">Belongs to the protein kinase superfamily. Ser/Thr protein kinase family.</text>
</comment>
<dbReference type="EC" id="2.7.11.1" evidence="7"/>
<dbReference type="EMBL" id="D82035">
    <property type="protein sequence ID" value="BAA36299.1"/>
    <property type="molecule type" value="mRNA"/>
</dbReference>
<dbReference type="EMBL" id="AB101656">
    <property type="protein sequence ID" value="BAC56589.1"/>
    <property type="molecule type" value="Genomic_DNA"/>
</dbReference>
<dbReference type="EMBL" id="AP005918">
    <property type="protein sequence ID" value="BAD10710.1"/>
    <property type="molecule type" value="Genomic_DNA"/>
</dbReference>
<dbReference type="EMBL" id="AP008214">
    <property type="protein sequence ID" value="BAF23997.1"/>
    <property type="molecule type" value="Genomic_DNA"/>
</dbReference>
<dbReference type="EMBL" id="AP014964">
    <property type="protein sequence ID" value="BAT05960.1"/>
    <property type="molecule type" value="Genomic_DNA"/>
</dbReference>
<dbReference type="EMBL" id="CM000145">
    <property type="protein sequence ID" value="EEE68886.1"/>
    <property type="molecule type" value="Genomic_DNA"/>
</dbReference>
<dbReference type="EMBL" id="AK072723">
    <property type="protein sequence ID" value="BAG93115.1"/>
    <property type="molecule type" value="mRNA"/>
</dbReference>
<dbReference type="EMBL" id="AK100591">
    <property type="protein sequence ID" value="BAG94669.1"/>
    <property type="molecule type" value="mRNA"/>
</dbReference>
<dbReference type="RefSeq" id="XP_015650152.1">
    <property type="nucleotide sequence ID" value="XM_015794666.1"/>
</dbReference>
<dbReference type="SMR" id="Q852Q1"/>
<dbReference type="FunCoup" id="Q852Q1">
    <property type="interactions" value="2096"/>
</dbReference>
<dbReference type="STRING" id="39947.Q852Q1"/>
<dbReference type="PaxDb" id="39947-Q852Q1"/>
<dbReference type="EnsemblPlants" id="Os08t0484600-01">
    <property type="protein sequence ID" value="Os08t0484600-01"/>
    <property type="gene ID" value="Os08g0484600"/>
</dbReference>
<dbReference type="Gramene" id="Os08t0484600-01">
    <property type="protein sequence ID" value="Os08t0484600-01"/>
    <property type="gene ID" value="Os08g0484600"/>
</dbReference>
<dbReference type="KEGG" id="dosa:Os08g0484600"/>
<dbReference type="eggNOG" id="KOG0583">
    <property type="taxonomic scope" value="Eukaryota"/>
</dbReference>
<dbReference type="HOGENOM" id="CLU_000288_59_3_1"/>
<dbReference type="InParanoid" id="Q852Q1"/>
<dbReference type="OMA" id="GHRYRDE"/>
<dbReference type="OrthoDB" id="193931at2759"/>
<dbReference type="Proteomes" id="UP000000763">
    <property type="component" value="Chromosome 8"/>
</dbReference>
<dbReference type="Proteomes" id="UP000007752">
    <property type="component" value="Chromosome 8"/>
</dbReference>
<dbReference type="Proteomes" id="UP000059680">
    <property type="component" value="Chromosome 8"/>
</dbReference>
<dbReference type="GO" id="GO:0005634">
    <property type="term" value="C:nucleus"/>
    <property type="evidence" value="ECO:0007669"/>
    <property type="project" value="UniProtKB-SubCell"/>
</dbReference>
<dbReference type="GO" id="GO:0005524">
    <property type="term" value="F:ATP binding"/>
    <property type="evidence" value="ECO:0007669"/>
    <property type="project" value="UniProtKB-KW"/>
</dbReference>
<dbReference type="GO" id="GO:0106310">
    <property type="term" value="F:protein serine kinase activity"/>
    <property type="evidence" value="ECO:0007669"/>
    <property type="project" value="RHEA"/>
</dbReference>
<dbReference type="GO" id="GO:0004674">
    <property type="term" value="F:protein serine/threonine kinase activity"/>
    <property type="evidence" value="ECO:0000318"/>
    <property type="project" value="GO_Central"/>
</dbReference>
<dbReference type="CDD" id="cd12122">
    <property type="entry name" value="AMPKA_C"/>
    <property type="match status" value="1"/>
</dbReference>
<dbReference type="CDD" id="cd14079">
    <property type="entry name" value="STKc_AMPK_alpha"/>
    <property type="match status" value="1"/>
</dbReference>
<dbReference type="CDD" id="cd14335">
    <property type="entry name" value="UBA_SnRK1_plant"/>
    <property type="match status" value="1"/>
</dbReference>
<dbReference type="FunFam" id="3.30.200.20:FF:000042">
    <property type="entry name" value="Aurora kinase A"/>
    <property type="match status" value="1"/>
</dbReference>
<dbReference type="FunFam" id="1.10.510.10:FF:000204">
    <property type="entry name" value="Non-specific serine/threonine protein kinase"/>
    <property type="match status" value="1"/>
</dbReference>
<dbReference type="FunFam" id="3.30.310.80:FF:000006">
    <property type="entry name" value="Non-specific serine/threonine protein kinase"/>
    <property type="match status" value="1"/>
</dbReference>
<dbReference type="Gene3D" id="3.30.310.80">
    <property type="entry name" value="Kinase associated domain 1, KA1"/>
    <property type="match status" value="1"/>
</dbReference>
<dbReference type="Gene3D" id="1.10.510.10">
    <property type="entry name" value="Transferase(Phosphotransferase) domain 1"/>
    <property type="match status" value="1"/>
</dbReference>
<dbReference type="InterPro" id="IPR028375">
    <property type="entry name" value="KA1/Ssp2_C"/>
</dbReference>
<dbReference type="InterPro" id="IPR001772">
    <property type="entry name" value="KA1_dom"/>
</dbReference>
<dbReference type="InterPro" id="IPR011009">
    <property type="entry name" value="Kinase-like_dom_sf"/>
</dbReference>
<dbReference type="InterPro" id="IPR000719">
    <property type="entry name" value="Prot_kinase_dom"/>
</dbReference>
<dbReference type="InterPro" id="IPR017441">
    <property type="entry name" value="Protein_kinase_ATP_BS"/>
</dbReference>
<dbReference type="InterPro" id="IPR008271">
    <property type="entry name" value="Ser/Thr_kinase_AS"/>
</dbReference>
<dbReference type="InterPro" id="IPR015940">
    <property type="entry name" value="UBA"/>
</dbReference>
<dbReference type="PANTHER" id="PTHR24346">
    <property type="entry name" value="MAP/MICROTUBULE AFFINITY-REGULATING KINASE"/>
    <property type="match status" value="1"/>
</dbReference>
<dbReference type="PANTHER" id="PTHR24346:SF103">
    <property type="entry name" value="NON-SPECIFIC SERINE_THREONINE PROTEIN KINASE"/>
    <property type="match status" value="1"/>
</dbReference>
<dbReference type="Pfam" id="PF02149">
    <property type="entry name" value="KA1"/>
    <property type="match status" value="1"/>
</dbReference>
<dbReference type="Pfam" id="PF00069">
    <property type="entry name" value="Pkinase"/>
    <property type="match status" value="1"/>
</dbReference>
<dbReference type="Pfam" id="PF00627">
    <property type="entry name" value="UBA"/>
    <property type="match status" value="1"/>
</dbReference>
<dbReference type="SMART" id="SM00220">
    <property type="entry name" value="S_TKc"/>
    <property type="match status" value="1"/>
</dbReference>
<dbReference type="SUPFAM" id="SSF103243">
    <property type="entry name" value="KA1-like"/>
    <property type="match status" value="1"/>
</dbReference>
<dbReference type="SUPFAM" id="SSF56112">
    <property type="entry name" value="Protein kinase-like (PK-like)"/>
    <property type="match status" value="1"/>
</dbReference>
<dbReference type="PROSITE" id="PS50032">
    <property type="entry name" value="KA1"/>
    <property type="match status" value="1"/>
</dbReference>
<dbReference type="PROSITE" id="PS00107">
    <property type="entry name" value="PROTEIN_KINASE_ATP"/>
    <property type="match status" value="1"/>
</dbReference>
<dbReference type="PROSITE" id="PS50011">
    <property type="entry name" value="PROTEIN_KINASE_DOM"/>
    <property type="match status" value="1"/>
</dbReference>
<dbReference type="PROSITE" id="PS00108">
    <property type="entry name" value="PROTEIN_KINASE_ST"/>
    <property type="match status" value="1"/>
</dbReference>
<dbReference type="PROSITE" id="PS50030">
    <property type="entry name" value="UBA"/>
    <property type="match status" value="1"/>
</dbReference>
<keyword id="KW-0067">ATP-binding</keyword>
<keyword id="KW-0418">Kinase</keyword>
<keyword id="KW-0547">Nucleotide-binding</keyword>
<keyword id="KW-0539">Nucleus</keyword>
<keyword id="KW-1185">Reference proteome</keyword>
<keyword id="KW-0723">Serine/threonine-protein kinase</keyword>
<keyword id="KW-0808">Transferase</keyword>
<organism>
    <name type="scientific">Oryza sativa subsp. japonica</name>
    <name type="common">Rice</name>
    <dbReference type="NCBI Taxonomy" id="39947"/>
    <lineage>
        <taxon>Eukaryota</taxon>
        <taxon>Viridiplantae</taxon>
        <taxon>Streptophyta</taxon>
        <taxon>Embryophyta</taxon>
        <taxon>Tracheophyta</taxon>
        <taxon>Spermatophyta</taxon>
        <taxon>Magnoliopsida</taxon>
        <taxon>Liliopsida</taxon>
        <taxon>Poales</taxon>
        <taxon>Poaceae</taxon>
        <taxon>BOP clade</taxon>
        <taxon>Oryzoideae</taxon>
        <taxon>Oryzeae</taxon>
        <taxon>Oryzinae</taxon>
        <taxon>Oryza</taxon>
        <taxon>Oryza sativa</taxon>
    </lineage>
</organism>
<sequence length="509" mass="58471">MEGNARGGGHSEALKNYNLGRTLGIGSFGKVKIAEHKLTGHRVAIKILNRRQMRNMEMEEKAKREIKILRLFIHPHIIRLYEVIYTPTDIYVVMEYCKFGELFDYIVEKGRLQEDEARRIFQQIISGVEYCHRNMVVHRDLKPENLLLDSKYNVKLADFGLSNVMHDGHFLKTSCGSPNYAAPEVISGKLYAGPEVDVWSCGVILYALLCGTLPFDDENIPNLFKKIKGGIYTLPSHLSALARDLIPRMLVVDPMKRITIREIREHQWFQIRLPRYLAVPPPDTAQQAKMIDEDTLQDVVNLGYEKDHVCESLRNRLQNEATVAYYLLLDNRFRATSGYLGADYQESLERNLNRFASSESASSNTRHYLPGSSDPHASGLRPHYPVERKWALGLQSRAQPREIMIEVLKALEDLNVCWKKNGQYNMKCRWSVGYPQATDMLDVNHSFVDDSIIMDNGDVNGRLPAVIKFEIQLYKSRDEKYLLDMQRVTGPQLLFLDFCAAFLTKLRVL</sequence>
<reference key="1">
    <citation type="journal article" date="1998" name="Mol. Gen. Genet.">
        <title>Rice has two distinct classes of protein kinase genes related to SNF1 of Saccharomyces cerevisiae, which are differently regulated in early seed development.</title>
        <authorList>
            <person name="Takano M."/>
            <person name="Kajiya-Kanegae H."/>
            <person name="Funatsuki H."/>
            <person name="Kikuchi S."/>
        </authorList>
    </citation>
    <scope>NUCLEOTIDE SEQUENCE [MRNA]</scope>
    <scope>CATALYTIC ACTIVITY</scope>
    <scope>TISSUE SPECIFICITY</scope>
    <scope>DEVELOPMENTAL STAGE</scope>
    <scope>GENE FAMILY</scope>
    <scope>NOMENCLATURE</scope>
    <source>
        <strain>cv. Nohrin 8</strain>
    </source>
</reference>
<reference key="2">
    <citation type="journal article" date="2005" name="Plant Physiol. Biochem.">
        <title>Expressions of rice sucrose non-fermenting-1 related protein kinase 1 genes are differently regulated during the caryopsis development.</title>
        <authorList>
            <person name="Kanegae H."/>
            <person name="Miyoshi K."/>
            <person name="Hirose T."/>
            <person name="Tsuchimoto S."/>
            <person name="Mori M."/>
            <person name="Nagato Y."/>
            <person name="Takano M."/>
        </authorList>
    </citation>
    <scope>NUCLEOTIDE SEQUENCE [GENOMIC DNA]</scope>
    <scope>DEVELOPMENTAL STAGE</scope>
    <scope>TISSUE SPECIFICITY</scope>
    <scope>GENE FAMILY</scope>
    <source>
        <strain>cv. Nohrin 8</strain>
    </source>
</reference>
<reference key="3">
    <citation type="journal article" date="2005" name="Nature">
        <title>The map-based sequence of the rice genome.</title>
        <authorList>
            <consortium name="International rice genome sequencing project (IRGSP)"/>
        </authorList>
    </citation>
    <scope>NUCLEOTIDE SEQUENCE [LARGE SCALE GENOMIC DNA]</scope>
    <source>
        <strain>cv. Nipponbare</strain>
    </source>
</reference>
<reference key="4">
    <citation type="journal article" date="2008" name="Nucleic Acids Res.">
        <title>The rice annotation project database (RAP-DB): 2008 update.</title>
        <authorList>
            <consortium name="The rice annotation project (RAP)"/>
        </authorList>
    </citation>
    <scope>GENOME REANNOTATION</scope>
    <source>
        <strain>cv. Nipponbare</strain>
    </source>
</reference>
<reference key="5">
    <citation type="journal article" date="2013" name="Rice">
        <title>Improvement of the Oryza sativa Nipponbare reference genome using next generation sequence and optical map data.</title>
        <authorList>
            <person name="Kawahara Y."/>
            <person name="de la Bastide M."/>
            <person name="Hamilton J.P."/>
            <person name="Kanamori H."/>
            <person name="McCombie W.R."/>
            <person name="Ouyang S."/>
            <person name="Schwartz D.C."/>
            <person name="Tanaka T."/>
            <person name="Wu J."/>
            <person name="Zhou S."/>
            <person name="Childs K.L."/>
            <person name="Davidson R.M."/>
            <person name="Lin H."/>
            <person name="Quesada-Ocampo L."/>
            <person name="Vaillancourt B."/>
            <person name="Sakai H."/>
            <person name="Lee S.S."/>
            <person name="Kim J."/>
            <person name="Numa H."/>
            <person name="Itoh T."/>
            <person name="Buell C.R."/>
            <person name="Matsumoto T."/>
        </authorList>
    </citation>
    <scope>GENOME REANNOTATION</scope>
    <source>
        <strain>cv. Nipponbare</strain>
    </source>
</reference>
<reference key="6">
    <citation type="journal article" date="2005" name="PLoS Biol.">
        <title>The genomes of Oryza sativa: a history of duplications.</title>
        <authorList>
            <person name="Yu J."/>
            <person name="Wang J."/>
            <person name="Lin W."/>
            <person name="Li S."/>
            <person name="Li H."/>
            <person name="Zhou J."/>
            <person name="Ni P."/>
            <person name="Dong W."/>
            <person name="Hu S."/>
            <person name="Zeng C."/>
            <person name="Zhang J."/>
            <person name="Zhang Y."/>
            <person name="Li R."/>
            <person name="Xu Z."/>
            <person name="Li S."/>
            <person name="Li X."/>
            <person name="Zheng H."/>
            <person name="Cong L."/>
            <person name="Lin L."/>
            <person name="Yin J."/>
            <person name="Geng J."/>
            <person name="Li G."/>
            <person name="Shi J."/>
            <person name="Liu J."/>
            <person name="Lv H."/>
            <person name="Li J."/>
            <person name="Wang J."/>
            <person name="Deng Y."/>
            <person name="Ran L."/>
            <person name="Shi X."/>
            <person name="Wang X."/>
            <person name="Wu Q."/>
            <person name="Li C."/>
            <person name="Ren X."/>
            <person name="Wang J."/>
            <person name="Wang X."/>
            <person name="Li D."/>
            <person name="Liu D."/>
            <person name="Zhang X."/>
            <person name="Ji Z."/>
            <person name="Zhao W."/>
            <person name="Sun Y."/>
            <person name="Zhang Z."/>
            <person name="Bao J."/>
            <person name="Han Y."/>
            <person name="Dong L."/>
            <person name="Ji J."/>
            <person name="Chen P."/>
            <person name="Wu S."/>
            <person name="Liu J."/>
            <person name="Xiao Y."/>
            <person name="Bu D."/>
            <person name="Tan J."/>
            <person name="Yang L."/>
            <person name="Ye C."/>
            <person name="Zhang J."/>
            <person name="Xu J."/>
            <person name="Zhou Y."/>
            <person name="Yu Y."/>
            <person name="Zhang B."/>
            <person name="Zhuang S."/>
            <person name="Wei H."/>
            <person name="Liu B."/>
            <person name="Lei M."/>
            <person name="Yu H."/>
            <person name="Li Y."/>
            <person name="Xu H."/>
            <person name="Wei S."/>
            <person name="He X."/>
            <person name="Fang L."/>
            <person name="Zhang Z."/>
            <person name="Zhang Y."/>
            <person name="Huang X."/>
            <person name="Su Z."/>
            <person name="Tong W."/>
            <person name="Li J."/>
            <person name="Tong Z."/>
            <person name="Li S."/>
            <person name="Ye J."/>
            <person name="Wang L."/>
            <person name="Fang L."/>
            <person name="Lei T."/>
            <person name="Chen C.-S."/>
            <person name="Chen H.-C."/>
            <person name="Xu Z."/>
            <person name="Li H."/>
            <person name="Huang H."/>
            <person name="Zhang F."/>
            <person name="Xu H."/>
            <person name="Li N."/>
            <person name="Zhao C."/>
            <person name="Li S."/>
            <person name="Dong L."/>
            <person name="Huang Y."/>
            <person name="Li L."/>
            <person name="Xi Y."/>
            <person name="Qi Q."/>
            <person name="Li W."/>
            <person name="Zhang B."/>
            <person name="Hu W."/>
            <person name="Zhang Y."/>
            <person name="Tian X."/>
            <person name="Jiao Y."/>
            <person name="Liang X."/>
            <person name="Jin J."/>
            <person name="Gao L."/>
            <person name="Zheng W."/>
            <person name="Hao B."/>
            <person name="Liu S.-M."/>
            <person name="Wang W."/>
            <person name="Yuan L."/>
            <person name="Cao M."/>
            <person name="McDermott J."/>
            <person name="Samudrala R."/>
            <person name="Wang J."/>
            <person name="Wong G.K.-S."/>
            <person name="Yang H."/>
        </authorList>
    </citation>
    <scope>NUCLEOTIDE SEQUENCE [LARGE SCALE GENOMIC DNA]</scope>
    <source>
        <strain>cv. Nipponbare</strain>
    </source>
</reference>
<reference key="7">
    <citation type="journal article" date="2003" name="Science">
        <title>Collection, mapping, and annotation of over 28,000 cDNA clones from japonica rice.</title>
        <authorList>
            <consortium name="The rice full-length cDNA consortium"/>
        </authorList>
    </citation>
    <scope>NUCLEOTIDE SEQUENCE [LARGE SCALE MRNA]</scope>
    <source>
        <strain>cv. Nipponbare</strain>
    </source>
</reference>
<reference key="8">
    <citation type="journal article" date="2007" name="Plant Cell">
        <title>The SnRK1A protein kinase plays a key role in sugar signaling during germination and seedling growth of rice.</title>
        <authorList>
            <person name="Lu C.-A."/>
            <person name="Lin C.-C."/>
            <person name="Lee K.-W."/>
            <person name="Chen J.-L."/>
            <person name="Huang L.-F."/>
            <person name="Ho S.-L."/>
            <person name="Liu H.-J."/>
            <person name="Hsing Y.-I."/>
            <person name="Yu S.-M."/>
        </authorList>
    </citation>
    <scope>DISRUPTION PHENOTYPE</scope>
    <scope>SUBCELLULAR LOCATION</scope>
    <source>
        <strain>cv. Tainung 67</strain>
    </source>
</reference>
<reference key="9">
    <citation type="journal article" date="2016" name="PLoS Genet.">
        <title>The Oryza sativa regulator HDR1 associates with the kinase OsK4 to control photoperiodic flowering.</title>
        <authorList>
            <person name="Sun X."/>
            <person name="Zhang Z."/>
            <person name="Wu J."/>
            <person name="Cui X."/>
            <person name="Feng D."/>
            <person name="Wang K."/>
            <person name="Xu M."/>
            <person name="Zhou L."/>
            <person name="Han X."/>
            <person name="Gu X."/>
            <person name="Lu T."/>
        </authorList>
    </citation>
    <scope>FUNCTION</scope>
    <scope>INTERACTION WITH HDR1</scope>
    <scope>SUBCELLULAR LOCATION</scope>
</reference>
<name>OSK4_ORYSJ</name>
<feature type="chain" id="PRO_0000438041" description="Serine/threonine protein kinase OSK4">
    <location>
        <begin position="1"/>
        <end position="509"/>
    </location>
</feature>
<feature type="domain" description="Protein kinase" evidence="1">
    <location>
        <begin position="17"/>
        <end position="269"/>
    </location>
</feature>
<feature type="domain" description="UBA" evidence="2">
    <location>
        <begin position="290"/>
        <end position="330"/>
    </location>
</feature>
<feature type="domain" description="KA1" evidence="3">
    <location>
        <begin position="460"/>
        <end position="508"/>
    </location>
</feature>
<feature type="active site" description="Proton acceptor" evidence="1">
    <location>
        <position position="140"/>
    </location>
</feature>
<feature type="binding site" evidence="1">
    <location>
        <begin position="23"/>
        <end position="31"/>
    </location>
    <ligand>
        <name>ATP</name>
        <dbReference type="ChEBI" id="CHEBI:30616"/>
    </ligand>
</feature>
<feature type="binding site" evidence="1">
    <location>
        <position position="46"/>
    </location>
    <ligand>
        <name>ATP</name>
        <dbReference type="ChEBI" id="CHEBI:30616"/>
    </ligand>
</feature>
<proteinExistence type="evidence at protein level"/>
<accession>Q852Q1</accession>
<accession>Q9ZRJ3</accession>
<protein>
    <recommendedName>
        <fullName evidence="10">Serine/threonine protein kinase OSK4</fullName>
        <shortName evidence="10">OsK4</shortName>
        <ecNumber evidence="7">2.7.11.1</ecNumber>
    </recommendedName>
    <alternativeName>
        <fullName evidence="9">SUCROSE NON-FERMENTING-1 related protein kinase 1B</fullName>
        <shortName evidence="9">SNF1-related kinase 1B</shortName>
        <shortName evidence="9">SnRK1B</shortName>
    </alternativeName>
    <alternativeName>
        <fullName evidence="8">Serine/threonine protein kinase OSK24</fullName>
        <shortName evidence="8">OsK24</shortName>
    </alternativeName>
</protein>